<dbReference type="EC" id="2.1.1.177" evidence="1"/>
<dbReference type="EMBL" id="CP000248">
    <property type="protein sequence ID" value="ABD24506.1"/>
    <property type="molecule type" value="Genomic_DNA"/>
</dbReference>
<dbReference type="RefSeq" id="WP_011443720.1">
    <property type="nucleotide sequence ID" value="NC_007794.1"/>
</dbReference>
<dbReference type="SMR" id="Q2GCB7"/>
<dbReference type="STRING" id="279238.Saro_0057"/>
<dbReference type="KEGG" id="nar:Saro_0057"/>
<dbReference type="eggNOG" id="COG1576">
    <property type="taxonomic scope" value="Bacteria"/>
</dbReference>
<dbReference type="HOGENOM" id="CLU_100552_1_1_5"/>
<dbReference type="Proteomes" id="UP000009134">
    <property type="component" value="Chromosome"/>
</dbReference>
<dbReference type="GO" id="GO:0005737">
    <property type="term" value="C:cytoplasm"/>
    <property type="evidence" value="ECO:0007669"/>
    <property type="project" value="UniProtKB-SubCell"/>
</dbReference>
<dbReference type="GO" id="GO:0070038">
    <property type="term" value="F:rRNA (pseudouridine-N3-)-methyltransferase activity"/>
    <property type="evidence" value="ECO:0007669"/>
    <property type="project" value="UniProtKB-UniRule"/>
</dbReference>
<dbReference type="CDD" id="cd18081">
    <property type="entry name" value="RlmH-like"/>
    <property type="match status" value="1"/>
</dbReference>
<dbReference type="Gene3D" id="3.40.1280.10">
    <property type="match status" value="1"/>
</dbReference>
<dbReference type="HAMAP" id="MF_00658">
    <property type="entry name" value="23SrRNA_methyltr_H"/>
    <property type="match status" value="1"/>
</dbReference>
<dbReference type="InterPro" id="IPR029028">
    <property type="entry name" value="Alpha/beta_knot_MTases"/>
</dbReference>
<dbReference type="InterPro" id="IPR003742">
    <property type="entry name" value="RlmH-like"/>
</dbReference>
<dbReference type="InterPro" id="IPR029026">
    <property type="entry name" value="tRNA_m1G_MTases_N"/>
</dbReference>
<dbReference type="PANTHER" id="PTHR33603">
    <property type="entry name" value="METHYLTRANSFERASE"/>
    <property type="match status" value="1"/>
</dbReference>
<dbReference type="PANTHER" id="PTHR33603:SF1">
    <property type="entry name" value="RIBOSOMAL RNA LARGE SUBUNIT METHYLTRANSFERASE H"/>
    <property type="match status" value="1"/>
</dbReference>
<dbReference type="Pfam" id="PF02590">
    <property type="entry name" value="SPOUT_MTase"/>
    <property type="match status" value="1"/>
</dbReference>
<dbReference type="PIRSF" id="PIRSF004505">
    <property type="entry name" value="MT_bac"/>
    <property type="match status" value="1"/>
</dbReference>
<dbReference type="SUPFAM" id="SSF75217">
    <property type="entry name" value="alpha/beta knot"/>
    <property type="match status" value="1"/>
</dbReference>
<organism>
    <name type="scientific">Novosphingobium aromaticivorans (strain ATCC 700278 / DSM 12444 / CCUG 56034 / CIP 105152 / NBRC 16084 / F199)</name>
    <dbReference type="NCBI Taxonomy" id="279238"/>
    <lineage>
        <taxon>Bacteria</taxon>
        <taxon>Pseudomonadati</taxon>
        <taxon>Pseudomonadota</taxon>
        <taxon>Alphaproteobacteria</taxon>
        <taxon>Sphingomonadales</taxon>
        <taxon>Sphingomonadaceae</taxon>
        <taxon>Novosphingobium</taxon>
    </lineage>
</organism>
<gene>
    <name evidence="1" type="primary">rlmH</name>
    <name type="ordered locus">Saro_0057</name>
</gene>
<feature type="chain" id="PRO_0000260579" description="Ribosomal RNA large subunit methyltransferase H">
    <location>
        <begin position="1"/>
        <end position="141"/>
    </location>
</feature>
<feature type="binding site" evidence="1">
    <location>
        <position position="88"/>
    </location>
    <ligand>
        <name>S-adenosyl-L-methionine</name>
        <dbReference type="ChEBI" id="CHEBI:59789"/>
    </ligand>
</feature>
<sequence length="141" mass="15762">MLLHVIARGKIGRSPEAELVDRYARRISWGWKVTELPDRGGTVPPPSHTPSRTVAMDERGRQLTSSEFAAILGRWRDDGVRETRFLIGAADGHDEALRESADLLIAFGNATWPHMLARAMLAEQLWRATSILAGHPYHREG</sequence>
<name>RLMH_NOVAD</name>
<protein>
    <recommendedName>
        <fullName evidence="1">Ribosomal RNA large subunit methyltransferase H</fullName>
        <ecNumber evidence="1">2.1.1.177</ecNumber>
    </recommendedName>
    <alternativeName>
        <fullName evidence="1">23S rRNA (pseudouridine1915-N3)-methyltransferase</fullName>
    </alternativeName>
    <alternativeName>
        <fullName evidence="1">23S rRNA m3Psi1915 methyltransferase</fullName>
    </alternativeName>
    <alternativeName>
        <fullName evidence="1">rRNA (pseudouridine-N3-)-methyltransferase RlmH</fullName>
    </alternativeName>
</protein>
<accession>Q2GCB7</accession>
<evidence type="ECO:0000255" key="1">
    <source>
        <dbReference type="HAMAP-Rule" id="MF_00658"/>
    </source>
</evidence>
<keyword id="KW-0963">Cytoplasm</keyword>
<keyword id="KW-0489">Methyltransferase</keyword>
<keyword id="KW-1185">Reference proteome</keyword>
<keyword id="KW-0698">rRNA processing</keyword>
<keyword id="KW-0949">S-adenosyl-L-methionine</keyword>
<keyword id="KW-0808">Transferase</keyword>
<reference key="1">
    <citation type="submission" date="2006-01" db="EMBL/GenBank/DDBJ databases">
        <title>Complete sequence of Novosphingobium aromaticivorans DSM 12444.</title>
        <authorList>
            <consortium name="US DOE Joint Genome Institute"/>
            <person name="Copeland A."/>
            <person name="Lucas S."/>
            <person name="Lapidus A."/>
            <person name="Barry K."/>
            <person name="Detter J.C."/>
            <person name="Glavina T."/>
            <person name="Hammon N."/>
            <person name="Israni S."/>
            <person name="Pitluck S."/>
            <person name="Chain P."/>
            <person name="Malfatti S."/>
            <person name="Shin M."/>
            <person name="Vergez L."/>
            <person name="Schmutz J."/>
            <person name="Larimer F."/>
            <person name="Land M."/>
            <person name="Kyrpides N."/>
            <person name="Ivanova N."/>
            <person name="Fredrickson J."/>
            <person name="Balkwill D."/>
            <person name="Romine M.F."/>
            <person name="Richardson P."/>
        </authorList>
    </citation>
    <scope>NUCLEOTIDE SEQUENCE [LARGE SCALE GENOMIC DNA]</scope>
    <source>
        <strain>ATCC 700278 / DSM 12444 / CCUG 56034 / CIP 105152 / NBRC 16084 / F199</strain>
    </source>
</reference>
<proteinExistence type="inferred from homology"/>
<comment type="function">
    <text evidence="1">Specifically methylates the pseudouridine at position 1915 (m3Psi1915) in 23S rRNA.</text>
</comment>
<comment type="catalytic activity">
    <reaction evidence="1">
        <text>pseudouridine(1915) in 23S rRNA + S-adenosyl-L-methionine = N(3)-methylpseudouridine(1915) in 23S rRNA + S-adenosyl-L-homocysteine + H(+)</text>
        <dbReference type="Rhea" id="RHEA:42752"/>
        <dbReference type="Rhea" id="RHEA-COMP:10221"/>
        <dbReference type="Rhea" id="RHEA-COMP:10222"/>
        <dbReference type="ChEBI" id="CHEBI:15378"/>
        <dbReference type="ChEBI" id="CHEBI:57856"/>
        <dbReference type="ChEBI" id="CHEBI:59789"/>
        <dbReference type="ChEBI" id="CHEBI:65314"/>
        <dbReference type="ChEBI" id="CHEBI:74486"/>
        <dbReference type="EC" id="2.1.1.177"/>
    </reaction>
</comment>
<comment type="subunit">
    <text evidence="1">Homodimer.</text>
</comment>
<comment type="subcellular location">
    <subcellularLocation>
        <location evidence="1">Cytoplasm</location>
    </subcellularLocation>
</comment>
<comment type="similarity">
    <text evidence="1">Belongs to the RNA methyltransferase RlmH family.</text>
</comment>